<feature type="chain" id="PRO_1000147149" description="Probable phosphatase YcdX">
    <location>
        <begin position="1"/>
        <end position="245"/>
    </location>
</feature>
<feature type="binding site" evidence="1">
    <location>
        <position position="7"/>
    </location>
    <ligand>
        <name>Zn(2+)</name>
        <dbReference type="ChEBI" id="CHEBI:29105"/>
        <label>1</label>
    </ligand>
</feature>
<feature type="binding site" evidence="1">
    <location>
        <position position="9"/>
    </location>
    <ligand>
        <name>Zn(2+)</name>
        <dbReference type="ChEBI" id="CHEBI:29105"/>
        <label>1</label>
    </ligand>
</feature>
<feature type="binding site" evidence="1">
    <location>
        <position position="15"/>
    </location>
    <ligand>
        <name>Zn(2+)</name>
        <dbReference type="ChEBI" id="CHEBI:29105"/>
        <label>2</label>
    </ligand>
</feature>
<feature type="binding site" evidence="1">
    <location>
        <position position="40"/>
    </location>
    <ligand>
        <name>Zn(2+)</name>
        <dbReference type="ChEBI" id="CHEBI:29105"/>
        <label>2</label>
    </ligand>
</feature>
<feature type="binding site" evidence="1">
    <location>
        <position position="73"/>
    </location>
    <ligand>
        <name>Zn(2+)</name>
        <dbReference type="ChEBI" id="CHEBI:29105"/>
        <label>1</label>
    </ligand>
</feature>
<feature type="binding site" evidence="1">
    <location>
        <position position="73"/>
    </location>
    <ligand>
        <name>Zn(2+)</name>
        <dbReference type="ChEBI" id="CHEBI:29105"/>
        <label>3</label>
    </ligand>
</feature>
<feature type="binding site" evidence="1">
    <location>
        <position position="101"/>
    </location>
    <ligand>
        <name>Zn(2+)</name>
        <dbReference type="ChEBI" id="CHEBI:29105"/>
        <label>3</label>
    </ligand>
</feature>
<feature type="binding site" evidence="1">
    <location>
        <position position="131"/>
    </location>
    <ligand>
        <name>Zn(2+)</name>
        <dbReference type="ChEBI" id="CHEBI:29105"/>
        <label>3</label>
    </ligand>
</feature>
<feature type="binding site" evidence="1">
    <location>
        <position position="192"/>
    </location>
    <ligand>
        <name>Zn(2+)</name>
        <dbReference type="ChEBI" id="CHEBI:29105"/>
        <label>1</label>
    </ligand>
</feature>
<feature type="binding site" evidence="1">
    <location>
        <position position="194"/>
    </location>
    <ligand>
        <name>Zn(2+)</name>
        <dbReference type="ChEBI" id="CHEBI:29105"/>
        <label>2</label>
    </ligand>
</feature>
<gene>
    <name evidence="1" type="primary">ycdX</name>
    <name type="ordered locus">SbBS512_E2295</name>
</gene>
<dbReference type="EC" id="3.1.3.-" evidence="1"/>
<dbReference type="EMBL" id="CP001063">
    <property type="protein sequence ID" value="ACD09278.1"/>
    <property type="molecule type" value="Genomic_DNA"/>
</dbReference>
<dbReference type="RefSeq" id="WP_000283664.1">
    <property type="nucleotide sequence ID" value="NC_010658.1"/>
</dbReference>
<dbReference type="SMR" id="B2TTN5"/>
<dbReference type="STRING" id="344609.SbBS512_E2295"/>
<dbReference type="GeneID" id="93776384"/>
<dbReference type="KEGG" id="sbc:SbBS512_E2295"/>
<dbReference type="HOGENOM" id="CLU_061999_0_1_6"/>
<dbReference type="Proteomes" id="UP000001030">
    <property type="component" value="Chromosome"/>
</dbReference>
<dbReference type="GO" id="GO:0005829">
    <property type="term" value="C:cytosol"/>
    <property type="evidence" value="ECO:0007669"/>
    <property type="project" value="TreeGrafter"/>
</dbReference>
<dbReference type="GO" id="GO:0016791">
    <property type="term" value="F:phosphatase activity"/>
    <property type="evidence" value="ECO:0007669"/>
    <property type="project" value="UniProtKB-UniRule"/>
</dbReference>
<dbReference type="GO" id="GO:0008270">
    <property type="term" value="F:zinc ion binding"/>
    <property type="evidence" value="ECO:0007669"/>
    <property type="project" value="UniProtKB-UniRule"/>
</dbReference>
<dbReference type="GO" id="GO:0071978">
    <property type="term" value="P:bacterial-type flagellum-dependent swarming motility"/>
    <property type="evidence" value="ECO:0007669"/>
    <property type="project" value="TreeGrafter"/>
</dbReference>
<dbReference type="CDD" id="cd07437">
    <property type="entry name" value="PHP_HisPPase_Ycdx_like"/>
    <property type="match status" value="1"/>
</dbReference>
<dbReference type="FunFam" id="3.20.20.140:FF:000008">
    <property type="entry name" value="Probable phosphatase YcdX"/>
    <property type="match status" value="1"/>
</dbReference>
<dbReference type="Gene3D" id="3.20.20.140">
    <property type="entry name" value="Metal-dependent hydrolases"/>
    <property type="match status" value="1"/>
</dbReference>
<dbReference type="HAMAP" id="MF_01561">
    <property type="entry name" value="YcdX_phosphat"/>
    <property type="match status" value="1"/>
</dbReference>
<dbReference type="InterPro" id="IPR023710">
    <property type="entry name" value="Phosphatase_YcdX_put"/>
</dbReference>
<dbReference type="InterPro" id="IPR004013">
    <property type="entry name" value="PHP_dom"/>
</dbReference>
<dbReference type="InterPro" id="IPR050243">
    <property type="entry name" value="PHP_phosphatase"/>
</dbReference>
<dbReference type="InterPro" id="IPR003141">
    <property type="entry name" value="Pol/His_phosphatase_N"/>
</dbReference>
<dbReference type="InterPro" id="IPR016195">
    <property type="entry name" value="Pol/histidinol_Pase-like"/>
</dbReference>
<dbReference type="NCBIfam" id="NF006702">
    <property type="entry name" value="PRK09248.1"/>
    <property type="match status" value="1"/>
</dbReference>
<dbReference type="PANTHER" id="PTHR36928">
    <property type="entry name" value="PHOSPHATASE YCDX-RELATED"/>
    <property type="match status" value="1"/>
</dbReference>
<dbReference type="PANTHER" id="PTHR36928:SF1">
    <property type="entry name" value="PHOSPHATASE YCDX-RELATED"/>
    <property type="match status" value="1"/>
</dbReference>
<dbReference type="Pfam" id="PF02811">
    <property type="entry name" value="PHP"/>
    <property type="match status" value="1"/>
</dbReference>
<dbReference type="SMART" id="SM00481">
    <property type="entry name" value="POLIIIAc"/>
    <property type="match status" value="1"/>
</dbReference>
<dbReference type="SUPFAM" id="SSF89550">
    <property type="entry name" value="PHP domain-like"/>
    <property type="match status" value="1"/>
</dbReference>
<protein>
    <recommendedName>
        <fullName evidence="1">Probable phosphatase YcdX</fullName>
        <ecNumber evidence="1">3.1.3.-</ecNumber>
    </recommendedName>
</protein>
<name>YCDX_SHIB3</name>
<evidence type="ECO:0000255" key="1">
    <source>
        <dbReference type="HAMAP-Rule" id="MF_01561"/>
    </source>
</evidence>
<organism>
    <name type="scientific">Shigella boydii serotype 18 (strain CDC 3083-94 / BS512)</name>
    <dbReference type="NCBI Taxonomy" id="344609"/>
    <lineage>
        <taxon>Bacteria</taxon>
        <taxon>Pseudomonadati</taxon>
        <taxon>Pseudomonadota</taxon>
        <taxon>Gammaproteobacteria</taxon>
        <taxon>Enterobacterales</taxon>
        <taxon>Enterobacteriaceae</taxon>
        <taxon>Shigella</taxon>
    </lineage>
</organism>
<keyword id="KW-0378">Hydrolase</keyword>
<keyword id="KW-0479">Metal-binding</keyword>
<keyword id="KW-1185">Reference proteome</keyword>
<keyword id="KW-0862">Zinc</keyword>
<comment type="cofactor">
    <cofactor evidence="1">
        <name>Zn(2+)</name>
        <dbReference type="ChEBI" id="CHEBI:29105"/>
    </cofactor>
    <text evidence="1">Binds 3 Zn(2+) ions per subunit.</text>
</comment>
<comment type="subunit">
    <text evidence="1">Homotrimer.</text>
</comment>
<comment type="similarity">
    <text evidence="1">Belongs to the PHP family.</text>
</comment>
<sequence length="245" mass="26832">MYPVDLHMHTVASTHAYSTLSDYIAQAKQKGIKLFAITDHGPDMEDAPHHWHFINMRIWPRVVDGVGILRGIEANIKNVDGEIDCSGKMFDSLDLIIAGFHEPVFAPHDKATNTQAMIATIASGNVHIISHPGNPKYEIDVKAVAEAAAKHQVALEINNSSFLHSRKGSEDNCRAVAAAVRDAGGWVALGSDSHTAFTMGEFEECLKILDAVDFPPERILNVSPRRLLNFLESRGMAPIAEFADL</sequence>
<reference key="1">
    <citation type="submission" date="2008-05" db="EMBL/GenBank/DDBJ databases">
        <title>Complete sequence of Shigella boydii serotype 18 strain BS512.</title>
        <authorList>
            <person name="Rasko D.A."/>
            <person name="Rosovitz M."/>
            <person name="Maurelli A.T."/>
            <person name="Myers G."/>
            <person name="Seshadri R."/>
            <person name="Cer R."/>
            <person name="Jiang L."/>
            <person name="Ravel J."/>
            <person name="Sebastian Y."/>
        </authorList>
    </citation>
    <scope>NUCLEOTIDE SEQUENCE [LARGE SCALE GENOMIC DNA]</scope>
    <source>
        <strain>CDC 3083-94 / BS512</strain>
    </source>
</reference>
<accession>B2TTN5</accession>
<proteinExistence type="inferred from homology"/>